<sequence length="597" mass="67469">MTLEKNRHANKGTSWTWMIYKFVVGVITVAILVLFITQKSVSQAQDKLRVEQQAIFSDQDTLQLKHIFHHGTGPKNYRLHRRLDITSEYLAKHQPYFTTLTQQLSEPVLEEHIASDNLDKIYQQSDWPEIHKGKNPFSIELPFKKADSEATRLKERNTLNFIESYLNYARDIKGDAQILNRINLDWIHDEIKVPNVTDRDTVVTLATISSNAYVRYPKDDDEKRKSDWIDLGDWDPNREDDDVNFGWDDIGLRGHVFVSKDNKTVVIGIKGTSGAGLPGGGSDETGGNDKTNDNLLFSCCCARISYMWTTVCDCYEKTYTCNQDCLEKELRKEDKYYQAVLELYRNVTDIYPPESTDIWVTGHSLGGALASLLGRTFGLPAVAFEAPGEMLATRRLHLPSPPGLPQHMENIWHFGNTADPIYMGVCNGASSTCNLAGYAMETTCHTGLQCVYDVVTDKGWSVNLLNHRIHTVIDDIILTYNETAPCAPSPPCRDCFNWRFVAHDDNEKDEPKLPNPLRSSSKSTLSTKTTSLKSSSTYSGSTSSSTVTKTTQTSPISSASPTDQDPPKKCLKRTWYGWCTKWGYDDDDDDEDTFERK</sequence>
<keyword id="KW-0072">Autophagy</keyword>
<keyword id="KW-0967">Endosome</keyword>
<keyword id="KW-0325">Glycoprotein</keyword>
<keyword id="KW-0378">Hydrolase</keyword>
<keyword id="KW-0442">Lipid degradation</keyword>
<keyword id="KW-0443">Lipid metabolism</keyword>
<keyword id="KW-0472">Membrane</keyword>
<keyword id="KW-1185">Reference proteome</keyword>
<keyword id="KW-0735">Signal-anchor</keyword>
<keyword id="KW-0812">Transmembrane</keyword>
<keyword id="KW-1133">Transmembrane helix</keyword>
<gene>
    <name type="primary">ATG15</name>
    <name type="ordered locus">CAALFM_C601740CA</name>
    <name type="ORF">Ca20C1.17</name>
    <name type="ORF">CaO19.10915</name>
    <name type="ORF">CaO19.3412</name>
</gene>
<protein>
    <recommendedName>
        <fullName>Putative lipase ATG15</fullName>
        <ecNumber>3.1.1.3</ecNumber>
    </recommendedName>
    <alternativeName>
        <fullName>Autophagy-related protein 15</fullName>
    </alternativeName>
</protein>
<evidence type="ECO:0000250" key="1"/>
<evidence type="ECO:0000250" key="2">
    <source>
        <dbReference type="UniProtKB" id="P25641"/>
    </source>
</evidence>
<evidence type="ECO:0000255" key="3"/>
<evidence type="ECO:0000255" key="4">
    <source>
        <dbReference type="PROSITE-ProRule" id="PRU10037"/>
    </source>
</evidence>
<evidence type="ECO:0000256" key="5">
    <source>
        <dbReference type="SAM" id="MobiDB-lite"/>
    </source>
</evidence>
<evidence type="ECO:0000305" key="6"/>
<comment type="function">
    <text evidence="1">Lipase which is essential for lysis of subvacuolar cytoplasm to vacuole targeted bodies and intravacuolar autophagic bodies. Involved in the lysis of intravacuolar multivesicular body (MVB) vesicles. The intravacuolar membrane disintegration by ATG15 is critical to life span extension (By similarity).</text>
</comment>
<comment type="catalytic activity">
    <reaction>
        <text>a triacylglycerol + H2O = a diacylglycerol + a fatty acid + H(+)</text>
        <dbReference type="Rhea" id="RHEA:12044"/>
        <dbReference type="ChEBI" id="CHEBI:15377"/>
        <dbReference type="ChEBI" id="CHEBI:15378"/>
        <dbReference type="ChEBI" id="CHEBI:17855"/>
        <dbReference type="ChEBI" id="CHEBI:18035"/>
        <dbReference type="ChEBI" id="CHEBI:28868"/>
        <dbReference type="EC" id="3.1.1.3"/>
    </reaction>
</comment>
<comment type="subunit">
    <text evidence="1">Binds to both phosphatidylinositol (PI) and phosphatidylinositol 3,5-bisphosphate (PIP2).</text>
</comment>
<comment type="subcellular location">
    <subcellularLocation>
        <location evidence="2">Endosome</location>
        <location evidence="2">Multivesicular body membrane</location>
        <topology evidence="2">Single-pass type II membrane protein</topology>
    </subcellularLocation>
    <subcellularLocation>
        <location evidence="2">Prevacuolar compartment membrane</location>
        <topology evidence="2">Single-pass type II membrane protein</topology>
    </subcellularLocation>
    <text evidence="2">From ER, targeted to vacuolar lumen at the MVB vesicles via the Golgi and the prevacuolar compartment (PVC).</text>
</comment>
<comment type="similarity">
    <text evidence="6">Belongs to the AB hydrolase superfamily. Lipase family.</text>
</comment>
<accession>Q5A4N0</accession>
<accession>A0A1D8PPQ8</accession>
<accession>O94004</accession>
<name>ATG15_CANAL</name>
<proteinExistence type="inferred from homology"/>
<feature type="chain" id="PRO_0000090365" description="Putative lipase ATG15">
    <location>
        <begin position="1"/>
        <end position="597"/>
    </location>
</feature>
<feature type="topological domain" description="Cytoplasmic" evidence="3">
    <location>
        <begin position="1"/>
        <end position="15"/>
    </location>
</feature>
<feature type="transmembrane region" description="Helical; Signal-anchor for type II membrane protein" evidence="3">
    <location>
        <begin position="16"/>
        <end position="36"/>
    </location>
</feature>
<feature type="topological domain" description="Lumenal" evidence="3">
    <location>
        <begin position="37"/>
        <end position="597"/>
    </location>
</feature>
<feature type="region of interest" description="Disordered" evidence="5">
    <location>
        <begin position="507"/>
        <end position="570"/>
    </location>
</feature>
<feature type="compositionally biased region" description="Low complexity" evidence="5">
    <location>
        <begin position="519"/>
        <end position="554"/>
    </location>
</feature>
<feature type="active site" description="Charge relay system" evidence="4">
    <location>
        <position position="364"/>
    </location>
</feature>
<feature type="glycosylation site" description="N-linked (GlcNAc...) asparagine" evidence="3">
    <location>
        <position position="195"/>
    </location>
</feature>
<feature type="glycosylation site" description="N-linked (GlcNAc...) asparagine" evidence="3">
    <location>
        <position position="262"/>
    </location>
</feature>
<feature type="glycosylation site" description="N-linked (GlcNAc...) asparagine" evidence="3">
    <location>
        <position position="346"/>
    </location>
</feature>
<feature type="glycosylation site" description="N-linked (GlcNAc...) asparagine" evidence="3">
    <location>
        <position position="481"/>
    </location>
</feature>
<feature type="sequence conflict" description="In Ref. 1; CAA21938." evidence="6" ref="1">
    <original>E</original>
    <variation>K</variation>
    <location>
        <position position="106"/>
    </location>
</feature>
<feature type="sequence conflict" description="In Ref. 1; CAA21938." evidence="6" ref="1">
    <original>D</original>
    <variation>Y</variation>
    <location>
        <position position="585"/>
    </location>
</feature>
<organism>
    <name type="scientific">Candida albicans (strain SC5314 / ATCC MYA-2876)</name>
    <name type="common">Yeast</name>
    <dbReference type="NCBI Taxonomy" id="237561"/>
    <lineage>
        <taxon>Eukaryota</taxon>
        <taxon>Fungi</taxon>
        <taxon>Dikarya</taxon>
        <taxon>Ascomycota</taxon>
        <taxon>Saccharomycotina</taxon>
        <taxon>Pichiomycetes</taxon>
        <taxon>Debaryomycetaceae</taxon>
        <taxon>Candida/Lodderomyces clade</taxon>
        <taxon>Candida</taxon>
    </lineage>
</organism>
<reference key="1">
    <citation type="submission" date="1998-11" db="EMBL/GenBank/DDBJ databases">
        <title>Candida albicans strain 1161 genome pilot sequencing project.</title>
        <authorList>
            <person name="Oliver K."/>
            <person name="Harris D."/>
            <person name="Barrell B.G."/>
            <person name="Rajandream M.A."/>
        </authorList>
    </citation>
    <scope>NUCLEOTIDE SEQUENCE [LARGE SCALE GENOMIC DNA]</scope>
    <source>
        <strain>1161</strain>
    </source>
</reference>
<reference key="2">
    <citation type="journal article" date="2004" name="Proc. Natl. Acad. Sci. U.S.A.">
        <title>The diploid genome sequence of Candida albicans.</title>
        <authorList>
            <person name="Jones T."/>
            <person name="Federspiel N.A."/>
            <person name="Chibana H."/>
            <person name="Dungan J."/>
            <person name="Kalman S."/>
            <person name="Magee B.B."/>
            <person name="Newport G."/>
            <person name="Thorstenson Y.R."/>
            <person name="Agabian N."/>
            <person name="Magee P.T."/>
            <person name="Davis R.W."/>
            <person name="Scherer S."/>
        </authorList>
    </citation>
    <scope>NUCLEOTIDE SEQUENCE [LARGE SCALE GENOMIC DNA]</scope>
    <source>
        <strain>SC5314 / ATCC MYA-2876</strain>
    </source>
</reference>
<reference key="3">
    <citation type="journal article" date="2007" name="Genome Biol.">
        <title>Assembly of the Candida albicans genome into sixteen supercontigs aligned on the eight chromosomes.</title>
        <authorList>
            <person name="van het Hoog M."/>
            <person name="Rast T.J."/>
            <person name="Martchenko M."/>
            <person name="Grindle S."/>
            <person name="Dignard D."/>
            <person name="Hogues H."/>
            <person name="Cuomo C."/>
            <person name="Berriman M."/>
            <person name="Scherer S."/>
            <person name="Magee B.B."/>
            <person name="Whiteway M."/>
            <person name="Chibana H."/>
            <person name="Nantel A."/>
            <person name="Magee P.T."/>
        </authorList>
    </citation>
    <scope>GENOME REANNOTATION</scope>
    <source>
        <strain>SC5314 / ATCC MYA-2876</strain>
    </source>
</reference>
<reference key="4">
    <citation type="journal article" date="2013" name="Genome Biol.">
        <title>Assembly of a phased diploid Candida albicans genome facilitates allele-specific measurements and provides a simple model for repeat and indel structure.</title>
        <authorList>
            <person name="Muzzey D."/>
            <person name="Schwartz K."/>
            <person name="Weissman J.S."/>
            <person name="Sherlock G."/>
        </authorList>
    </citation>
    <scope>NUCLEOTIDE SEQUENCE [LARGE SCALE GENOMIC DNA]</scope>
    <scope>GENOME REANNOTATION</scope>
    <source>
        <strain>SC5314 / ATCC MYA-2876</strain>
    </source>
</reference>
<dbReference type="EC" id="3.1.1.3"/>
<dbReference type="EMBL" id="AL033391">
    <property type="protein sequence ID" value="CAA21938.1"/>
    <property type="molecule type" value="Genomic_DNA"/>
</dbReference>
<dbReference type="EMBL" id="CP017628">
    <property type="protein sequence ID" value="AOW30111.1"/>
    <property type="molecule type" value="Genomic_DNA"/>
</dbReference>
<dbReference type="RefSeq" id="XP_716721.1">
    <property type="nucleotide sequence ID" value="XM_711628.2"/>
</dbReference>
<dbReference type="FunCoup" id="Q5A4N0">
    <property type="interactions" value="67"/>
</dbReference>
<dbReference type="STRING" id="237561.Q5A4N0"/>
<dbReference type="ESTHER" id="canal-ATG15">
    <property type="family name" value="ATG15-related-lipase"/>
</dbReference>
<dbReference type="GlyCosmos" id="Q5A4N0">
    <property type="glycosylation" value="4 sites, No reported glycans"/>
</dbReference>
<dbReference type="EnsemblFungi" id="C6_01740C_A-T">
    <property type="protein sequence ID" value="C6_01740C_A-T-p1"/>
    <property type="gene ID" value="C6_01740C_A"/>
</dbReference>
<dbReference type="GeneID" id="3641641"/>
<dbReference type="KEGG" id="cal:CAALFM_C601740CA"/>
<dbReference type="CGD" id="CAL0000191921">
    <property type="gene designation" value="ATG15"/>
</dbReference>
<dbReference type="VEuPathDB" id="FungiDB:C6_01740C_A"/>
<dbReference type="HOGENOM" id="CLU_028295_0_2_1"/>
<dbReference type="InParanoid" id="Q5A4N0"/>
<dbReference type="OrthoDB" id="58570at2759"/>
<dbReference type="PRO" id="PR:Q5A4N0"/>
<dbReference type="Proteomes" id="UP000000559">
    <property type="component" value="Chromosome 6"/>
</dbReference>
<dbReference type="GO" id="GO:0016020">
    <property type="term" value="C:membrane"/>
    <property type="evidence" value="ECO:0000318"/>
    <property type="project" value="GO_Central"/>
</dbReference>
<dbReference type="GO" id="GO:0032585">
    <property type="term" value="C:multivesicular body membrane"/>
    <property type="evidence" value="ECO:0007669"/>
    <property type="project" value="UniProtKB-SubCell"/>
</dbReference>
<dbReference type="GO" id="GO:0005775">
    <property type="term" value="C:vacuolar lumen"/>
    <property type="evidence" value="ECO:0000318"/>
    <property type="project" value="GO_Central"/>
</dbReference>
<dbReference type="GO" id="GO:0004620">
    <property type="term" value="F:phospholipase activity"/>
    <property type="evidence" value="ECO:0000318"/>
    <property type="project" value="GO_Central"/>
</dbReference>
<dbReference type="GO" id="GO:0004806">
    <property type="term" value="F:triacylglycerol lipase activity"/>
    <property type="evidence" value="ECO:0007669"/>
    <property type="project" value="UniProtKB-EC"/>
</dbReference>
<dbReference type="GO" id="GO:0034496">
    <property type="term" value="P:multivesicular body membrane disassembly"/>
    <property type="evidence" value="ECO:0000318"/>
    <property type="project" value="GO_Central"/>
</dbReference>
<dbReference type="GO" id="GO:0046461">
    <property type="term" value="P:neutral lipid catabolic process"/>
    <property type="evidence" value="ECO:0000318"/>
    <property type="project" value="GO_Central"/>
</dbReference>
<dbReference type="GO" id="GO:0006660">
    <property type="term" value="P:phosphatidylserine catabolic process"/>
    <property type="evidence" value="ECO:0000318"/>
    <property type="project" value="GO_Central"/>
</dbReference>
<dbReference type="GO" id="GO:0034727">
    <property type="term" value="P:piecemeal microautophagy of the nucleus"/>
    <property type="evidence" value="ECO:0000318"/>
    <property type="project" value="GO_Central"/>
</dbReference>
<dbReference type="CDD" id="cd00519">
    <property type="entry name" value="Lipase_3"/>
    <property type="match status" value="1"/>
</dbReference>
<dbReference type="FunFam" id="3.40.50.1820:FF:000339">
    <property type="entry name" value="Lipase, putative"/>
    <property type="match status" value="1"/>
</dbReference>
<dbReference type="Gene3D" id="3.40.50.1820">
    <property type="entry name" value="alpha/beta hydrolase"/>
    <property type="match status" value="1"/>
</dbReference>
<dbReference type="InterPro" id="IPR029058">
    <property type="entry name" value="AB_hydrolase_fold"/>
</dbReference>
<dbReference type="InterPro" id="IPR050805">
    <property type="entry name" value="ATG15_Lipase"/>
</dbReference>
<dbReference type="InterPro" id="IPR002921">
    <property type="entry name" value="Fungal_lipase-type"/>
</dbReference>
<dbReference type="PANTHER" id="PTHR47175">
    <property type="entry name" value="LIPASE ATG15-RELATED"/>
    <property type="match status" value="1"/>
</dbReference>
<dbReference type="PANTHER" id="PTHR47175:SF2">
    <property type="entry name" value="LIPASE ATG15-RELATED"/>
    <property type="match status" value="1"/>
</dbReference>
<dbReference type="Pfam" id="PF01764">
    <property type="entry name" value="Lipase_3"/>
    <property type="match status" value="1"/>
</dbReference>
<dbReference type="SUPFAM" id="SSF53474">
    <property type="entry name" value="alpha/beta-Hydrolases"/>
    <property type="match status" value="1"/>
</dbReference>
<dbReference type="PROSITE" id="PS00120">
    <property type="entry name" value="LIPASE_SER"/>
    <property type="match status" value="1"/>
</dbReference>